<reference key="1">
    <citation type="journal article" date="2001" name="DNA Res.">
        <title>Complete genome sequence of an aerobic thermoacidophilic Crenarchaeon, Sulfolobus tokodaii strain7.</title>
        <authorList>
            <person name="Kawarabayasi Y."/>
            <person name="Hino Y."/>
            <person name="Horikawa H."/>
            <person name="Jin-no K."/>
            <person name="Takahashi M."/>
            <person name="Sekine M."/>
            <person name="Baba S."/>
            <person name="Ankai A."/>
            <person name="Kosugi H."/>
            <person name="Hosoyama A."/>
            <person name="Fukui S."/>
            <person name="Nagai Y."/>
            <person name="Nishijima K."/>
            <person name="Otsuka R."/>
            <person name="Nakazawa H."/>
            <person name="Takamiya M."/>
            <person name="Kato Y."/>
            <person name="Yoshizawa T."/>
            <person name="Tanaka T."/>
            <person name="Kudoh Y."/>
            <person name="Yamazaki J."/>
            <person name="Kushida N."/>
            <person name="Oguchi A."/>
            <person name="Aoki K."/>
            <person name="Masuda S."/>
            <person name="Yanagii M."/>
            <person name="Nishimura M."/>
            <person name="Yamagishi A."/>
            <person name="Oshima T."/>
            <person name="Kikuchi H."/>
        </authorList>
    </citation>
    <scope>NUCLEOTIDE SEQUENCE [LARGE SCALE GENOMIC DNA]</scope>
    <source>
        <strain>DSM 16993 / JCM 10545 / NBRC 100140 / 7</strain>
    </source>
</reference>
<proteinExistence type="inferred from homology"/>
<comment type="function">
    <text evidence="1">DNA-dependent RNA polymerase (RNAP) catalyzes the transcription of DNA into RNA using the four ribonucleoside triphosphates as substrates.</text>
</comment>
<comment type="catalytic activity">
    <reaction evidence="1">
        <text>RNA(n) + a ribonucleoside 5'-triphosphate = RNA(n+1) + diphosphate</text>
        <dbReference type="Rhea" id="RHEA:21248"/>
        <dbReference type="Rhea" id="RHEA-COMP:14527"/>
        <dbReference type="Rhea" id="RHEA-COMP:17342"/>
        <dbReference type="ChEBI" id="CHEBI:33019"/>
        <dbReference type="ChEBI" id="CHEBI:61557"/>
        <dbReference type="ChEBI" id="CHEBI:140395"/>
        <dbReference type="EC" id="2.7.7.6"/>
    </reaction>
</comment>
<comment type="cofactor">
    <cofactor evidence="1">
        <name>Zn(2+)</name>
        <dbReference type="ChEBI" id="CHEBI:29105"/>
    </cofactor>
    <text evidence="1">Binds 1 zinc ion.</text>
</comment>
<comment type="subunit">
    <text evidence="1">Part of the RNA polymerase complex.</text>
</comment>
<comment type="subcellular location">
    <subcellularLocation>
        <location evidence="1">Cytoplasm</location>
    </subcellularLocation>
</comment>
<comment type="similarity">
    <text evidence="1">Belongs to the archaeal Rpo12/eukaryotic RPC10 RNA polymerase subunit family.</text>
</comment>
<sequence length="48" mass="5670">MAKYRCGNCWREFDDEQLRALPGVRCPYCGYKIIYMVRKPTVKVVKAI</sequence>
<protein>
    <recommendedName>
        <fullName evidence="1">DNA-directed RNA polymerase subunit Rpo12</fullName>
        <ecNumber evidence="1">2.7.7.6</ecNumber>
    </recommendedName>
    <alternativeName>
        <fullName evidence="1">DNA-directed RNA polymerase subunit P</fullName>
    </alternativeName>
</protein>
<organism>
    <name type="scientific">Sulfurisphaera tokodaii (strain DSM 16993 / JCM 10545 / NBRC 100140 / 7)</name>
    <name type="common">Sulfolobus tokodaii</name>
    <dbReference type="NCBI Taxonomy" id="273063"/>
    <lineage>
        <taxon>Archaea</taxon>
        <taxon>Thermoproteota</taxon>
        <taxon>Thermoprotei</taxon>
        <taxon>Sulfolobales</taxon>
        <taxon>Sulfolobaceae</taxon>
        <taxon>Sulfurisphaera</taxon>
    </lineage>
</organism>
<dbReference type="EC" id="2.7.7.6" evidence="1"/>
<dbReference type="EMBL" id="BA000023">
    <property type="protein sequence ID" value="BAK54245.1"/>
    <property type="molecule type" value="Genomic_DNA"/>
</dbReference>
<dbReference type="RefSeq" id="WP_010978314.1">
    <property type="nucleotide sequence ID" value="NC_003106.2"/>
</dbReference>
<dbReference type="SMR" id="Q975R9"/>
<dbReference type="STRING" id="273063.STK_03510"/>
<dbReference type="KEGG" id="sto:STK_03510"/>
<dbReference type="PATRIC" id="fig|273063.9.peg.410"/>
<dbReference type="eggNOG" id="arCOG04341">
    <property type="taxonomic scope" value="Archaea"/>
</dbReference>
<dbReference type="OrthoDB" id="129238at2157"/>
<dbReference type="Proteomes" id="UP000001015">
    <property type="component" value="Chromosome"/>
</dbReference>
<dbReference type="GO" id="GO:0005737">
    <property type="term" value="C:cytoplasm"/>
    <property type="evidence" value="ECO:0007669"/>
    <property type="project" value="UniProtKB-SubCell"/>
</dbReference>
<dbReference type="GO" id="GO:0000428">
    <property type="term" value="C:DNA-directed RNA polymerase complex"/>
    <property type="evidence" value="ECO:0007669"/>
    <property type="project" value="UniProtKB-KW"/>
</dbReference>
<dbReference type="GO" id="GO:0003677">
    <property type="term" value="F:DNA binding"/>
    <property type="evidence" value="ECO:0007669"/>
    <property type="project" value="InterPro"/>
</dbReference>
<dbReference type="GO" id="GO:0003899">
    <property type="term" value="F:DNA-directed RNA polymerase activity"/>
    <property type="evidence" value="ECO:0007669"/>
    <property type="project" value="UniProtKB-UniRule"/>
</dbReference>
<dbReference type="GO" id="GO:0008270">
    <property type="term" value="F:zinc ion binding"/>
    <property type="evidence" value="ECO:0007669"/>
    <property type="project" value="UniProtKB-UniRule"/>
</dbReference>
<dbReference type="GO" id="GO:0006351">
    <property type="term" value="P:DNA-templated transcription"/>
    <property type="evidence" value="ECO:0007669"/>
    <property type="project" value="UniProtKB-UniRule"/>
</dbReference>
<dbReference type="Gene3D" id="2.20.28.30">
    <property type="entry name" value="RNA polymerase ii, chain L"/>
    <property type="match status" value="1"/>
</dbReference>
<dbReference type="HAMAP" id="MF_00615">
    <property type="entry name" value="RNApol_arch_Rpo12"/>
    <property type="match status" value="1"/>
</dbReference>
<dbReference type="InterPro" id="IPR006591">
    <property type="entry name" value="RNAP_P/RPABC4"/>
</dbReference>
<dbReference type="InterPro" id="IPR029040">
    <property type="entry name" value="RPABC4/Spt4"/>
</dbReference>
<dbReference type="InterPro" id="IPR023464">
    <property type="entry name" value="Rpo12"/>
</dbReference>
<dbReference type="NCBIfam" id="NF001604">
    <property type="entry name" value="PRK00398.1-1"/>
    <property type="match status" value="1"/>
</dbReference>
<dbReference type="SMART" id="SM00659">
    <property type="entry name" value="RPOLCX"/>
    <property type="match status" value="1"/>
</dbReference>
<dbReference type="SUPFAM" id="SSF63393">
    <property type="entry name" value="RNA polymerase subunits"/>
    <property type="match status" value="1"/>
</dbReference>
<keyword id="KW-0963">Cytoplasm</keyword>
<keyword id="KW-0240">DNA-directed RNA polymerase</keyword>
<keyword id="KW-0479">Metal-binding</keyword>
<keyword id="KW-0548">Nucleotidyltransferase</keyword>
<keyword id="KW-1185">Reference proteome</keyword>
<keyword id="KW-0804">Transcription</keyword>
<keyword id="KW-0808">Transferase</keyword>
<keyword id="KW-0862">Zinc</keyword>
<evidence type="ECO:0000255" key="1">
    <source>
        <dbReference type="HAMAP-Rule" id="MF_00615"/>
    </source>
</evidence>
<gene>
    <name evidence="1" type="primary">rpo12</name>
    <name evidence="1" type="synonym">rpoP</name>
    <name type="ordered locus">STK_03510</name>
</gene>
<accession>Q975R9</accession>
<accession>F9VMU8</accession>
<feature type="chain" id="PRO_0000159768" description="DNA-directed RNA polymerase subunit Rpo12">
    <location>
        <begin position="1"/>
        <end position="48"/>
    </location>
</feature>
<feature type="binding site" evidence="1">
    <location>
        <position position="9"/>
    </location>
    <ligand>
        <name>Zn(2+)</name>
        <dbReference type="ChEBI" id="CHEBI:29105"/>
    </ligand>
</feature>
<feature type="binding site" evidence="1">
    <location>
        <position position="26"/>
    </location>
    <ligand>
        <name>Zn(2+)</name>
        <dbReference type="ChEBI" id="CHEBI:29105"/>
    </ligand>
</feature>
<feature type="binding site" evidence="1">
    <location>
        <position position="29"/>
    </location>
    <ligand>
        <name>Zn(2+)</name>
        <dbReference type="ChEBI" id="CHEBI:29105"/>
    </ligand>
</feature>
<name>RPO12_SULTO</name>